<keyword id="KW-1185">Reference proteome</keyword>
<sequence>MASIQTKLVSQPQTQQPLQNGFFNNYQQNIYRPQGIQSPPQQTPPSQPQQQPILPQQPQPQSQQPLHLQQQQQQQQQQQLLQQQQILQQQQQLLQLQQQQQNLIKQQQHQAQQQNFLHPQAQQVQSQLQLQSQPQPQPQPVNNVNNNNNNNNNNNNNNNNNNNKPFGTNNIHYSLVQQQQLLQQQAQQQLLQQQQHQQLLLQQQQAQQQSSLNNSLNSSGNNSTLNTSNNNNNVLLGANFNNASNPSINIGDPQLNNSNTNNVNNINTNNTNNNNKSGSIDQFGSPQIGVSYVNSSSNSAIPTPPTNQTNGSNSHSPTPVGINSNININSNLQSPQNIQQTILSPNISPNHNNNNNNNNNNNNNNNNNNNNNNKVSEELNEQLRMQQQQRQQQQQQIPQQPMQLLLQQQQQQQAQLQQQQAQLQQQQQAQLQQQQQAQLQQQQQAQQQAQQQAQQQQQQLKIYQQHFGQLQHQIHMLQQQPQNPQTQQQINGLLQQQAQIQQQQAIIIQQMQQMQQNQQIQQNQQLPQQQQQQQQQQQQQQQQAQQLLLQQQLQQQQQQQQQQQLQQAQQAQQQQQQQQQQQAQQQQQQQAQQQQQQQQQQQQQQQQQQQQQQQQQQQQQQQQQQQQQQQQQQQAQQQPQAQQSQQQAQQQQQNQQQPQQLNQNPPNQQLPQQPNQITQQQQQQQHQTNQILQNQQSQQILQLQQLQQQQQQQQQQQQQQQQQQQQQQQQLQQQQQQQQQQQQQQQQQQRQQPNQVQPNQPIDYNKKLELLNHPIWGKVLKETRQQIVLVYELLRMRCEGPHIKRNLFYQGIGLAPFSLSLPILSPSGLINATTGKPILKCTGSATSLYIVEDNNLFFQHNCGEQLVISKLFGAKVVPISTYESFLDHIVNILFNLTLLSPDELNLCTNRKNQPTFPLYQLDNKLSLVNQVQNQNQNQNNNNNNNNNNNNNINCNNANGTNIVISEVKNDINQLQPQQPPPQQQQAIPFVPSPTNDGNSVNNNINNNFINNNSFVNNNNNNNIQPTKSIIGVSNPFQNNNNNNNNNNNNNNNNNNNNNNNNNNNNNNNNNNNNNNNNNTNNNINNNINNQQQLYIQQQQYSQQQQQQQQNPQQQNPQQQNPQQLQQQQHLQQLQQQLLQQQLLQQQQQQQQQQQQQQQMQQQIQQPPQQNIEPINQLSDNQINMQQFNMLNNTNGNFNINNTNNLVRSSVQY</sequence>
<evidence type="ECO:0000256" key="1">
    <source>
        <dbReference type="SAM" id="MobiDB-lite"/>
    </source>
</evidence>
<dbReference type="EMBL" id="AAFI02000006">
    <property type="protein sequence ID" value="EAL71667.1"/>
    <property type="molecule type" value="Genomic_DNA"/>
</dbReference>
<dbReference type="RefSeq" id="XP_645552.1">
    <property type="nucleotide sequence ID" value="XM_640460.1"/>
</dbReference>
<dbReference type="STRING" id="44689.Q86AF2"/>
<dbReference type="PaxDb" id="44689-DDB0216864"/>
<dbReference type="EnsemblProtists" id="EAL71667">
    <property type="protein sequence ID" value="EAL71667"/>
    <property type="gene ID" value="DDB_G0271606"/>
</dbReference>
<dbReference type="GeneID" id="8618009"/>
<dbReference type="KEGG" id="ddi:DDB_G0271606"/>
<dbReference type="dictyBase" id="DDB_G0271606"/>
<dbReference type="VEuPathDB" id="AmoebaDB:DDB_G0271606"/>
<dbReference type="eggNOG" id="ENOG502RSP7">
    <property type="taxonomic scope" value="Eukaryota"/>
</dbReference>
<dbReference type="HOGENOM" id="CLU_269656_0_0_1"/>
<dbReference type="InParanoid" id="Q86AF2"/>
<dbReference type="OMA" id="NINCNNA"/>
<dbReference type="PRO" id="PR:Q86AF2"/>
<dbReference type="Proteomes" id="UP000002195">
    <property type="component" value="Chromosome 2"/>
</dbReference>
<dbReference type="GO" id="GO:0048188">
    <property type="term" value="C:Set1C/COMPASS complex"/>
    <property type="evidence" value="ECO:0007669"/>
    <property type="project" value="InterPro"/>
</dbReference>
<dbReference type="InterPro" id="IPR037856">
    <property type="entry name" value="Sdc1/DPY30"/>
</dbReference>
<dbReference type="PANTHER" id="PTHR23356:SF16">
    <property type="entry name" value="DPY30 DOMAIN CONTAINING 2"/>
    <property type="match status" value="1"/>
</dbReference>
<dbReference type="PANTHER" id="PTHR23356">
    <property type="entry name" value="DPY30-RELATED"/>
    <property type="match status" value="1"/>
</dbReference>
<proteinExistence type="predicted"/>
<name>Y6864_DICDI</name>
<gene>
    <name type="ORF">DDB_G0271606</name>
</gene>
<feature type="chain" id="PRO_0000348111" description="Putative uncharacterized protein DDB_G0271606">
    <location>
        <begin position="1"/>
        <end position="1212"/>
    </location>
</feature>
<feature type="region of interest" description="Disordered" evidence="1">
    <location>
        <begin position="1"/>
        <end position="70"/>
    </location>
</feature>
<feature type="region of interest" description="Disordered" evidence="1">
    <location>
        <begin position="119"/>
        <end position="169"/>
    </location>
</feature>
<feature type="region of interest" description="Disordered" evidence="1">
    <location>
        <begin position="211"/>
        <end position="231"/>
    </location>
</feature>
<feature type="region of interest" description="Disordered" evidence="1">
    <location>
        <begin position="248"/>
        <end position="374"/>
    </location>
</feature>
<feature type="region of interest" description="Disordered" evidence="1">
    <location>
        <begin position="655"/>
        <end position="681"/>
    </location>
</feature>
<feature type="region of interest" description="Disordered" evidence="1">
    <location>
        <begin position="935"/>
        <end position="957"/>
    </location>
</feature>
<feature type="region of interest" description="Disordered" evidence="1">
    <location>
        <begin position="973"/>
        <end position="1125"/>
    </location>
</feature>
<feature type="compositionally biased region" description="Polar residues" evidence="1">
    <location>
        <begin position="1"/>
        <end position="31"/>
    </location>
</feature>
<feature type="compositionally biased region" description="Low complexity" evidence="1">
    <location>
        <begin position="48"/>
        <end position="70"/>
    </location>
</feature>
<feature type="compositionally biased region" description="Low complexity" evidence="1">
    <location>
        <begin position="119"/>
        <end position="163"/>
    </location>
</feature>
<feature type="compositionally biased region" description="Low complexity" evidence="1">
    <location>
        <begin position="256"/>
        <end position="275"/>
    </location>
</feature>
<feature type="compositionally biased region" description="Polar residues" evidence="1">
    <location>
        <begin position="276"/>
        <end position="285"/>
    </location>
</feature>
<feature type="compositionally biased region" description="Polar residues" evidence="1">
    <location>
        <begin position="292"/>
        <end position="317"/>
    </location>
</feature>
<feature type="compositionally biased region" description="Low complexity" evidence="1">
    <location>
        <begin position="322"/>
        <end position="340"/>
    </location>
</feature>
<feature type="compositionally biased region" description="Polar residues" evidence="1">
    <location>
        <begin position="341"/>
        <end position="351"/>
    </location>
</feature>
<feature type="compositionally biased region" description="Low complexity" evidence="1">
    <location>
        <begin position="352"/>
        <end position="373"/>
    </location>
</feature>
<feature type="compositionally biased region" description="Low complexity" evidence="1">
    <location>
        <begin position="998"/>
        <end position="1022"/>
    </location>
</feature>
<feature type="compositionally biased region" description="Low complexity" evidence="1">
    <location>
        <begin position="1037"/>
        <end position="1125"/>
    </location>
</feature>
<accession>Q86AF2</accession>
<accession>Q55AZ4</accession>
<reference key="1">
    <citation type="journal article" date="2002" name="Nature">
        <title>Sequence and analysis of chromosome 2 of Dictyostelium discoideum.</title>
        <authorList>
            <person name="Gloeckner G."/>
            <person name="Eichinger L."/>
            <person name="Szafranski K."/>
            <person name="Pachebat J.A."/>
            <person name="Bankier A.T."/>
            <person name="Dear P.H."/>
            <person name="Lehmann R."/>
            <person name="Baumgart C."/>
            <person name="Parra G."/>
            <person name="Abril J.F."/>
            <person name="Guigo R."/>
            <person name="Kumpf K."/>
            <person name="Tunggal B."/>
            <person name="Cox E.C."/>
            <person name="Quail M.A."/>
            <person name="Platzer M."/>
            <person name="Rosenthal A."/>
            <person name="Noegel A.A."/>
        </authorList>
    </citation>
    <scope>NUCLEOTIDE SEQUENCE [LARGE SCALE GENOMIC DNA]</scope>
    <source>
        <strain>AX4</strain>
    </source>
</reference>
<reference key="2">
    <citation type="journal article" date="2005" name="Nature">
        <title>The genome of the social amoeba Dictyostelium discoideum.</title>
        <authorList>
            <person name="Eichinger L."/>
            <person name="Pachebat J.A."/>
            <person name="Gloeckner G."/>
            <person name="Rajandream M.A."/>
            <person name="Sucgang R."/>
            <person name="Berriman M."/>
            <person name="Song J."/>
            <person name="Olsen R."/>
            <person name="Szafranski K."/>
            <person name="Xu Q."/>
            <person name="Tunggal B."/>
            <person name="Kummerfeld S."/>
            <person name="Madera M."/>
            <person name="Konfortov B.A."/>
            <person name="Rivero F."/>
            <person name="Bankier A.T."/>
            <person name="Lehmann R."/>
            <person name="Hamlin N."/>
            <person name="Davies R."/>
            <person name="Gaudet P."/>
            <person name="Fey P."/>
            <person name="Pilcher K."/>
            <person name="Chen G."/>
            <person name="Saunders D."/>
            <person name="Sodergren E.J."/>
            <person name="Davis P."/>
            <person name="Kerhornou A."/>
            <person name="Nie X."/>
            <person name="Hall N."/>
            <person name="Anjard C."/>
            <person name="Hemphill L."/>
            <person name="Bason N."/>
            <person name="Farbrother P."/>
            <person name="Desany B."/>
            <person name="Just E."/>
            <person name="Morio T."/>
            <person name="Rost R."/>
            <person name="Churcher C.M."/>
            <person name="Cooper J."/>
            <person name="Haydock S."/>
            <person name="van Driessche N."/>
            <person name="Cronin A."/>
            <person name="Goodhead I."/>
            <person name="Muzny D.M."/>
            <person name="Mourier T."/>
            <person name="Pain A."/>
            <person name="Lu M."/>
            <person name="Harper D."/>
            <person name="Lindsay R."/>
            <person name="Hauser H."/>
            <person name="James K.D."/>
            <person name="Quiles M."/>
            <person name="Madan Babu M."/>
            <person name="Saito T."/>
            <person name="Buchrieser C."/>
            <person name="Wardroper A."/>
            <person name="Felder M."/>
            <person name="Thangavelu M."/>
            <person name="Johnson D."/>
            <person name="Knights A."/>
            <person name="Loulseged H."/>
            <person name="Mungall K.L."/>
            <person name="Oliver K."/>
            <person name="Price C."/>
            <person name="Quail M.A."/>
            <person name="Urushihara H."/>
            <person name="Hernandez J."/>
            <person name="Rabbinowitsch E."/>
            <person name="Steffen D."/>
            <person name="Sanders M."/>
            <person name="Ma J."/>
            <person name="Kohara Y."/>
            <person name="Sharp S."/>
            <person name="Simmonds M.N."/>
            <person name="Spiegler S."/>
            <person name="Tivey A."/>
            <person name="Sugano S."/>
            <person name="White B."/>
            <person name="Walker D."/>
            <person name="Woodward J.R."/>
            <person name="Winckler T."/>
            <person name="Tanaka Y."/>
            <person name="Shaulsky G."/>
            <person name="Schleicher M."/>
            <person name="Weinstock G.M."/>
            <person name="Rosenthal A."/>
            <person name="Cox E.C."/>
            <person name="Chisholm R.L."/>
            <person name="Gibbs R.A."/>
            <person name="Loomis W.F."/>
            <person name="Platzer M."/>
            <person name="Kay R.R."/>
            <person name="Williams J.G."/>
            <person name="Dear P.H."/>
            <person name="Noegel A.A."/>
            <person name="Barrell B.G."/>
            <person name="Kuspa A."/>
        </authorList>
    </citation>
    <scope>NUCLEOTIDE SEQUENCE [LARGE SCALE GENOMIC DNA]</scope>
    <source>
        <strain>AX4</strain>
    </source>
</reference>
<protein>
    <recommendedName>
        <fullName>Putative uncharacterized protein DDB_G0271606</fullName>
    </recommendedName>
</protein>
<organism>
    <name type="scientific">Dictyostelium discoideum</name>
    <name type="common">Social amoeba</name>
    <dbReference type="NCBI Taxonomy" id="44689"/>
    <lineage>
        <taxon>Eukaryota</taxon>
        <taxon>Amoebozoa</taxon>
        <taxon>Evosea</taxon>
        <taxon>Eumycetozoa</taxon>
        <taxon>Dictyostelia</taxon>
        <taxon>Dictyosteliales</taxon>
        <taxon>Dictyosteliaceae</taxon>
        <taxon>Dictyostelium</taxon>
    </lineage>
</organism>